<name>STAD_RICCO</name>
<reference key="1">
    <citation type="journal article" date="1991" name="Proc. Natl. Acad. Sci. U.S.A.">
        <title>Stearoyl-acyl-carrier-protein desaturase from higher plants is structurally unrelated to the animal and fungal homologs.</title>
        <authorList>
            <person name="Shanklin J."/>
            <person name="Somerville C.R."/>
        </authorList>
    </citation>
    <scope>NUCLEOTIDE SEQUENCE [MRNA]</scope>
</reference>
<reference key="2">
    <citation type="journal article" date="1991" name="Plant Physiol.">
        <title>Nucleotide sequence of a complementary DNA clone encoding stearoyl-acyl carrier protein desaturase from castor bean, Ricinus communis.</title>
        <authorList>
            <person name="Knutzon D.S."/>
            <person name="Scherer D.E."/>
            <person name="Schreckengost W.E."/>
        </authorList>
    </citation>
    <scope>NUCLEOTIDE SEQUENCE [MRNA]</scope>
    <source>
        <tissue>Endosperm</tissue>
    </source>
</reference>
<reference key="3">
    <citation type="journal article" date="1996" name="EMBO J.">
        <title>Crystal structure of delta9 stearoyl-acyl carrier protein desaturase from castor seed and its relationship to other di-iron proteins.</title>
        <authorList>
            <person name="Lindqvist Y."/>
            <person name="Huang W."/>
            <person name="Schneider G."/>
            <person name="Shanklin J."/>
        </authorList>
    </citation>
    <scope>X-RAY CRYSTALLOGRAPHY (2.40 ANGSTROMS) OF 52-396 IN COMPLEX WITH IRON</scope>
    <scope>COFACTOR</scope>
</reference>
<reference key="4">
    <citation type="journal article" date="2003" name="J. Biol. Chem.">
        <title>Azide and acetate complexes plus two iron-depleted crystal structures of the di-iron enzyme delta9 stearoyl-acyl carrier protein desaturase. Implications for oxygen activation and catalytic intermediates.</title>
        <authorList>
            <person name="Moche M."/>
            <person name="Shanklin J."/>
            <person name="Ghoshal A."/>
            <person name="Lindqvist Y."/>
        </authorList>
    </citation>
    <scope>X-RAY CRYSTALLOGRAPHY (2.40 ANGSTROMS) OF 34-396 IN COMPLEX WITH IRON</scope>
    <scope>COFACTOR</scope>
</reference>
<reference key="5">
    <citation type="journal article" date="2006" name="Proc. Natl. Acad. Sci. U.S.A.">
        <title>A single mutation in the castor Delta9-18:0-desaturase changes reaction partitioning from desaturation to oxidase chemistry.</title>
        <authorList>
            <person name="Guy J.E."/>
            <person name="Abreu I.A."/>
            <person name="Moche M."/>
            <person name="Lindqvist Y."/>
            <person name="Whittle E."/>
            <person name="Shanklin J."/>
        </authorList>
    </citation>
    <scope>X-RAY CRYSTALLOGRAPHY (2.65 ANGSTROMS) OF 34-396 IN COMPLEX WITH IRON</scope>
    <scope>MUTAGENESIS OF THR-232</scope>
    <scope>FUNCTION</scope>
    <scope>CATALYTIC ACTIVITY</scope>
    <scope>COFACTOR</scope>
</reference>
<reference key="6">
    <citation type="journal article" date="2011" name="Proc. Natl. Acad. Sci. U.S.A.">
        <title>Remote control of regioselectivity in acyl-acyl carrier protein-desaturases.</title>
        <authorList>
            <person name="Guy J.E."/>
            <person name="Whittle E."/>
            <person name="Moche M."/>
            <person name="Lengqvist J."/>
            <person name="Lindqvist Y."/>
            <person name="Shanklin J."/>
        </authorList>
    </citation>
    <scope>X-RAY CRYSTALLOGRAPHY (3.00 ANGSTROMS) OF 34-396</scope>
    <scope>MUTAGENESIS OF ASP-313</scope>
    <scope>FUNCTION</scope>
    <scope>CATALYTIC ACTIVITY</scope>
</reference>
<keyword id="KW-0002">3D-structure</keyword>
<keyword id="KW-0150">Chloroplast</keyword>
<keyword id="KW-0275">Fatty acid biosynthesis</keyword>
<keyword id="KW-0276">Fatty acid metabolism</keyword>
<keyword id="KW-0408">Iron</keyword>
<keyword id="KW-0444">Lipid biosynthesis</keyword>
<keyword id="KW-0443">Lipid metabolism</keyword>
<keyword id="KW-0479">Metal-binding</keyword>
<keyword id="KW-0560">Oxidoreductase</keyword>
<keyword id="KW-0934">Plastid</keyword>
<keyword id="KW-0809">Transit peptide</keyword>
<protein>
    <recommendedName>
        <fullName>Stearoyl-[acyl-carrier-protein] 9-desaturase, chloroplastic</fullName>
        <shortName>Stearoyl-ACP desaturase</shortName>
        <ecNumber evidence="2 3">1.14.19.2</ecNumber>
    </recommendedName>
    <alternativeName>
        <fullName>Acyl-[acyl-carrier-protein] desaturase</fullName>
    </alternativeName>
    <alternativeName>
        <fullName>Delta(9) stearoyl-acyl carrier protein desaturase</fullName>
    </alternativeName>
</protein>
<feature type="transit peptide" description="Chloroplast">
    <location>
        <begin position="1"/>
        <end position="33"/>
    </location>
</feature>
<feature type="chain" id="PRO_0000007137" description="Stearoyl-[acyl-carrier-protein] 9-desaturase, chloroplastic">
    <location>
        <begin position="34"/>
        <end position="396"/>
    </location>
</feature>
<feature type="binding site" evidence="1 2 4">
    <location>
        <position position="138"/>
    </location>
    <ligand>
        <name>Fe cation</name>
        <dbReference type="ChEBI" id="CHEBI:24875"/>
        <label>1</label>
    </ligand>
</feature>
<feature type="binding site" evidence="1 2 4">
    <location>
        <position position="176"/>
    </location>
    <ligand>
        <name>Fe cation</name>
        <dbReference type="ChEBI" id="CHEBI:24875"/>
        <label>1</label>
    </ligand>
</feature>
<feature type="binding site" evidence="1 2 4">
    <location>
        <position position="176"/>
    </location>
    <ligand>
        <name>Fe cation</name>
        <dbReference type="ChEBI" id="CHEBI:24875"/>
        <label>2</label>
    </ligand>
</feature>
<feature type="binding site" evidence="1 2 4">
    <location>
        <position position="179"/>
    </location>
    <ligand>
        <name>Fe cation</name>
        <dbReference type="ChEBI" id="CHEBI:24875"/>
        <label>1</label>
    </ligand>
</feature>
<feature type="binding site" evidence="1 2 4">
    <location>
        <position position="229"/>
    </location>
    <ligand>
        <name>Fe cation</name>
        <dbReference type="ChEBI" id="CHEBI:24875"/>
        <label>2</label>
    </ligand>
</feature>
<feature type="binding site" evidence="1 2 4">
    <location>
        <position position="262"/>
    </location>
    <ligand>
        <name>Fe cation</name>
        <dbReference type="ChEBI" id="CHEBI:24875"/>
        <label>1</label>
    </ligand>
</feature>
<feature type="binding site" evidence="1 2 4">
    <location>
        <position position="262"/>
    </location>
    <ligand>
        <name>Fe cation</name>
        <dbReference type="ChEBI" id="CHEBI:24875"/>
        <label>2</label>
    </ligand>
</feature>
<feature type="binding site" evidence="1 2 4">
    <location>
        <position position="265"/>
    </location>
    <ligand>
        <name>Fe cation</name>
        <dbReference type="ChEBI" id="CHEBI:24875"/>
        <label>2</label>
    </ligand>
</feature>
<feature type="mutagenesis site" description="Decreases desaturase activity and increases oxidase activity." evidence="2">
    <original>T</original>
    <variation>D</variation>
    <variation>E</variation>
    <location>
        <position position="232"/>
    </location>
</feature>
<feature type="mutagenesis site" description="Decreases Delta(9) desaturase activity and increases Delta(4) desaturase activity." evidence="3">
    <original>D</original>
    <variation>K</variation>
    <variation>R</variation>
    <location>
        <position position="313"/>
    </location>
</feature>
<feature type="turn" evidence="6">
    <location>
        <begin position="67"/>
        <end position="69"/>
    </location>
</feature>
<feature type="helix" evidence="6">
    <location>
        <begin position="70"/>
        <end position="75"/>
    </location>
</feature>
<feature type="helix" evidence="6">
    <location>
        <begin position="77"/>
        <end position="83"/>
    </location>
</feature>
<feature type="helix" evidence="6">
    <location>
        <begin position="85"/>
        <end position="87"/>
    </location>
</feature>
<feature type="helix" evidence="6">
    <location>
        <begin position="91"/>
        <end position="93"/>
    </location>
</feature>
<feature type="helix" evidence="6">
    <location>
        <begin position="97"/>
        <end position="100"/>
    </location>
</feature>
<feature type="helix" evidence="6">
    <location>
        <begin position="109"/>
        <end position="121"/>
    </location>
</feature>
<feature type="helix" evidence="6">
    <location>
        <begin position="125"/>
        <end position="139"/>
    </location>
</feature>
<feature type="helix" evidence="6">
    <location>
        <begin position="141"/>
        <end position="148"/>
    </location>
</feature>
<feature type="turn" evidence="6">
    <location>
        <begin position="152"/>
        <end position="154"/>
    </location>
</feature>
<feature type="strand" evidence="6">
    <location>
        <begin position="157"/>
        <end position="160"/>
    </location>
</feature>
<feature type="helix" evidence="6">
    <location>
        <begin position="164"/>
        <end position="190"/>
    </location>
</feature>
<feature type="strand" evidence="7">
    <location>
        <begin position="191"/>
        <end position="193"/>
    </location>
</feature>
<feature type="helix" evidence="6">
    <location>
        <begin position="195"/>
        <end position="208"/>
    </location>
</feature>
<feature type="helix" evidence="6">
    <location>
        <begin position="218"/>
        <end position="245"/>
    </location>
</feature>
<feature type="helix" evidence="6">
    <location>
        <begin position="249"/>
        <end position="279"/>
    </location>
</feature>
<feature type="helix" evidence="6">
    <location>
        <begin position="281"/>
        <end position="294"/>
    </location>
</feature>
<feature type="turn" evidence="6">
    <location>
        <begin position="299"/>
        <end position="302"/>
    </location>
</feature>
<feature type="helix" evidence="6">
    <location>
        <begin position="311"/>
        <end position="322"/>
    </location>
</feature>
<feature type="helix" evidence="6">
    <location>
        <begin position="327"/>
        <end position="341"/>
    </location>
</feature>
<feature type="helix" evidence="6">
    <location>
        <begin position="343"/>
        <end position="345"/>
    </location>
</feature>
<feature type="helix" evidence="6">
    <location>
        <begin position="351"/>
        <end position="372"/>
    </location>
</feature>
<feature type="helix" evidence="6">
    <location>
        <begin position="376"/>
        <end position="379"/>
    </location>
</feature>
<feature type="strand" evidence="6">
    <location>
        <begin position="383"/>
        <end position="385"/>
    </location>
</feature>
<feature type="helix" evidence="6">
    <location>
        <begin position="387"/>
        <end position="389"/>
    </location>
</feature>
<feature type="strand" evidence="6">
    <location>
        <begin position="393"/>
        <end position="395"/>
    </location>
</feature>
<organism>
    <name type="scientific">Ricinus communis</name>
    <name type="common">Castor bean</name>
    <dbReference type="NCBI Taxonomy" id="3988"/>
    <lineage>
        <taxon>Eukaryota</taxon>
        <taxon>Viridiplantae</taxon>
        <taxon>Streptophyta</taxon>
        <taxon>Embryophyta</taxon>
        <taxon>Tracheophyta</taxon>
        <taxon>Spermatophyta</taxon>
        <taxon>Magnoliopsida</taxon>
        <taxon>eudicotyledons</taxon>
        <taxon>Gunneridae</taxon>
        <taxon>Pentapetalae</taxon>
        <taxon>rosids</taxon>
        <taxon>fabids</taxon>
        <taxon>Malpighiales</taxon>
        <taxon>Euphorbiaceae</taxon>
        <taxon>Acalyphoideae</taxon>
        <taxon>Acalypheae</taxon>
        <taxon>Ricinus</taxon>
    </lineage>
</organism>
<evidence type="ECO:0000269" key="1">
    <source>
    </source>
</evidence>
<evidence type="ECO:0000269" key="2">
    <source>
    </source>
</evidence>
<evidence type="ECO:0000269" key="3">
    <source>
    </source>
</evidence>
<evidence type="ECO:0000269" key="4">
    <source>
    </source>
</evidence>
<evidence type="ECO:0000305" key="5"/>
<evidence type="ECO:0007829" key="6">
    <source>
        <dbReference type="PDB" id="1AFR"/>
    </source>
</evidence>
<evidence type="ECO:0007829" key="7">
    <source>
        <dbReference type="PDB" id="1OQ4"/>
    </source>
</evidence>
<comment type="function">
    <text evidence="2 3">Converts stearoyl-ACP to oleoyl-ACP by introduction of a cis double bond between carbons 9 and 10 of the acyl chain.</text>
</comment>
<comment type="catalytic activity">
    <reaction evidence="2 3">
        <text>octadecanoyl-[ACP] + 2 reduced [2Fe-2S]-[ferredoxin] + O2 + 2 H(+) = (9Z)-octadecenoyl-[ACP] + 2 oxidized [2Fe-2S]-[ferredoxin] + 2 H2O</text>
        <dbReference type="Rhea" id="RHEA:11776"/>
        <dbReference type="Rhea" id="RHEA-COMP:9656"/>
        <dbReference type="Rhea" id="RHEA-COMP:9924"/>
        <dbReference type="Rhea" id="RHEA-COMP:10000"/>
        <dbReference type="Rhea" id="RHEA-COMP:10001"/>
        <dbReference type="ChEBI" id="CHEBI:15377"/>
        <dbReference type="ChEBI" id="CHEBI:15378"/>
        <dbReference type="ChEBI" id="CHEBI:15379"/>
        <dbReference type="ChEBI" id="CHEBI:33737"/>
        <dbReference type="ChEBI" id="CHEBI:33738"/>
        <dbReference type="ChEBI" id="CHEBI:78495"/>
        <dbReference type="ChEBI" id="CHEBI:78783"/>
        <dbReference type="EC" id="1.14.19.2"/>
    </reaction>
</comment>
<comment type="cofactor">
    <cofactor evidence="1 2 4">
        <name>Fe(2+)</name>
        <dbReference type="ChEBI" id="CHEBI:29033"/>
    </cofactor>
    <text evidence="1 2 4">Binds 2 Fe(2+) ions per subunit.</text>
</comment>
<comment type="pathway">
    <text>Lipid metabolism; fatty acid metabolism.</text>
</comment>
<comment type="subunit">
    <text evidence="1 2 4">Homodimer.</text>
</comment>
<comment type="interaction">
    <interactant intactId="EBI-15944981">
        <id>P22337</id>
    </interactant>
    <interactant intactId="EBI-15944962">
        <id>P07854</id>
        <label>ACL1.1</label>
    </interactant>
    <organismsDiffer>true</organismsDiffer>
    <experiments>2</experiments>
</comment>
<comment type="subcellular location">
    <subcellularLocation>
        <location>Plastid</location>
        <location>Chloroplast</location>
    </subcellularLocation>
    <subcellularLocation>
        <location>Plastid</location>
    </subcellularLocation>
    <text>In green tissue, found in chloroplasts. In non-photosynthetic tissue, found in plastids.</text>
</comment>
<comment type="tissue specificity">
    <text>Higher levels in developing seeds than in leaf and root tissues.</text>
</comment>
<comment type="similarity">
    <text evidence="5">Belongs to the fatty acid desaturase type 2 family.</text>
</comment>
<comment type="sequence caution" evidence="5">
    <conflict type="erroneous initiation">
        <sequence resource="EMBL-CDS" id="AAA74692"/>
    </conflict>
    <text>Extended N-terminus.</text>
</comment>
<proteinExistence type="evidence at protein level"/>
<accession>P22337</accession>
<dbReference type="EC" id="1.14.19.2" evidence="2 3"/>
<dbReference type="EMBL" id="M59857">
    <property type="protein sequence ID" value="AAA74692.1"/>
    <property type="status" value="ALT_INIT"/>
    <property type="molecule type" value="mRNA"/>
</dbReference>
<dbReference type="EMBL" id="X56508">
    <property type="protein sequence ID" value="CAA39859.1"/>
    <property type="molecule type" value="mRNA"/>
</dbReference>
<dbReference type="PIR" id="S16463">
    <property type="entry name" value="OHCSAD"/>
</dbReference>
<dbReference type="RefSeq" id="NP_001310659.1">
    <property type="nucleotide sequence ID" value="NM_001323730.1"/>
</dbReference>
<dbReference type="PDB" id="1AFR">
    <property type="method" value="X-ray"/>
    <property type="resolution" value="2.40 A"/>
    <property type="chains" value="A/B/C/D/E/F=52-396"/>
</dbReference>
<dbReference type="PDB" id="1OQ4">
    <property type="method" value="X-ray"/>
    <property type="resolution" value="2.40 A"/>
    <property type="chains" value="A/B/C/D/E/F=34-396"/>
</dbReference>
<dbReference type="PDB" id="1OQ7">
    <property type="method" value="X-ray"/>
    <property type="resolution" value="3.20 A"/>
    <property type="chains" value="A/B/C/D/E/F=34-396"/>
</dbReference>
<dbReference type="PDB" id="1OQ9">
    <property type="method" value="X-ray"/>
    <property type="resolution" value="2.40 A"/>
    <property type="chains" value="A=34-396"/>
</dbReference>
<dbReference type="PDB" id="1OQB">
    <property type="method" value="X-ray"/>
    <property type="resolution" value="2.80 A"/>
    <property type="chains" value="A/B/C/D/E/F=34-396"/>
</dbReference>
<dbReference type="PDB" id="2J2F">
    <property type="method" value="X-ray"/>
    <property type="resolution" value="2.65 A"/>
    <property type="chains" value="A/B/C/D/E/F=34-396"/>
</dbReference>
<dbReference type="PDB" id="2XZ0">
    <property type="method" value="X-ray"/>
    <property type="resolution" value="3.00 A"/>
    <property type="chains" value="A/B/C=34-396"/>
</dbReference>
<dbReference type="PDB" id="2XZ1">
    <property type="method" value="X-ray"/>
    <property type="resolution" value="3.35 A"/>
    <property type="chains" value="A/B=34-396"/>
</dbReference>
<dbReference type="PDB" id="4V0J">
    <property type="method" value="X-ray"/>
    <property type="resolution" value="2.80 A"/>
    <property type="chains" value="A/B/C/D/E/F=66-396"/>
</dbReference>
<dbReference type="PDBsum" id="1AFR"/>
<dbReference type="PDBsum" id="1OQ4"/>
<dbReference type="PDBsum" id="1OQ7"/>
<dbReference type="PDBsum" id="1OQ9"/>
<dbReference type="PDBsum" id="1OQB"/>
<dbReference type="PDBsum" id="2J2F"/>
<dbReference type="PDBsum" id="2XZ0"/>
<dbReference type="PDBsum" id="2XZ1"/>
<dbReference type="PDBsum" id="4V0J"/>
<dbReference type="SMR" id="P22337"/>
<dbReference type="DIP" id="DIP-60379N"/>
<dbReference type="IntAct" id="P22337">
    <property type="interactions" value="1"/>
</dbReference>
<dbReference type="GeneID" id="8271760"/>
<dbReference type="KEGG" id="rcu:8271760"/>
<dbReference type="eggNOG" id="ENOG502QRJK">
    <property type="taxonomic scope" value="Eukaryota"/>
</dbReference>
<dbReference type="OMA" id="NRHSMLH"/>
<dbReference type="OrthoDB" id="1924153at2759"/>
<dbReference type="BRENDA" id="1.14.19.2">
    <property type="organism ID" value="1204"/>
</dbReference>
<dbReference type="SABIO-RK" id="P22337"/>
<dbReference type="UniPathway" id="UPA00199"/>
<dbReference type="EvolutionaryTrace" id="P22337"/>
<dbReference type="GO" id="GO:0009507">
    <property type="term" value="C:chloroplast"/>
    <property type="evidence" value="ECO:0007669"/>
    <property type="project" value="UniProtKB-SubCell"/>
</dbReference>
<dbReference type="GO" id="GO:0046872">
    <property type="term" value="F:metal ion binding"/>
    <property type="evidence" value="ECO:0007669"/>
    <property type="project" value="UniProtKB-KW"/>
</dbReference>
<dbReference type="GO" id="GO:0045300">
    <property type="term" value="F:stearoyl-[ACP] desaturase activity"/>
    <property type="evidence" value="ECO:0007669"/>
    <property type="project" value="UniProtKB-EC"/>
</dbReference>
<dbReference type="GO" id="GO:0006633">
    <property type="term" value="P:fatty acid biosynthetic process"/>
    <property type="evidence" value="ECO:0007669"/>
    <property type="project" value="UniProtKB-KW"/>
</dbReference>
<dbReference type="CDD" id="cd01050">
    <property type="entry name" value="Acyl_ACP_Desat"/>
    <property type="match status" value="1"/>
</dbReference>
<dbReference type="FunFam" id="1.10.620.20:FF:000002">
    <property type="entry name" value="Stearoyl-[acyl-carrier-protein] 9-desaturase, chloroplastic"/>
    <property type="match status" value="1"/>
</dbReference>
<dbReference type="Gene3D" id="1.10.620.20">
    <property type="entry name" value="Ribonucleotide Reductase, subunit A"/>
    <property type="match status" value="1"/>
</dbReference>
<dbReference type="InterPro" id="IPR005803">
    <property type="entry name" value="FADS-2_CS"/>
</dbReference>
<dbReference type="InterPro" id="IPR005067">
    <property type="entry name" value="Fatty_acid_desaturase-2"/>
</dbReference>
<dbReference type="InterPro" id="IPR009078">
    <property type="entry name" value="Ferritin-like_SF"/>
</dbReference>
<dbReference type="InterPro" id="IPR012348">
    <property type="entry name" value="RNR-like"/>
</dbReference>
<dbReference type="PANTHER" id="PTHR31155">
    <property type="entry name" value="ACYL- ACYL-CARRIER-PROTEIN DESATURASE-RELATED"/>
    <property type="match status" value="1"/>
</dbReference>
<dbReference type="PANTHER" id="PTHR31155:SF9">
    <property type="entry name" value="STEAROYL-[ACYL-CARRIER-PROTEIN] 9-DESATURASE 7, CHLOROPLASTIC"/>
    <property type="match status" value="1"/>
</dbReference>
<dbReference type="Pfam" id="PF03405">
    <property type="entry name" value="FA_desaturase_2"/>
    <property type="match status" value="1"/>
</dbReference>
<dbReference type="PIRSF" id="PIRSF000346">
    <property type="entry name" value="Dlt9_acylACP_des"/>
    <property type="match status" value="1"/>
</dbReference>
<dbReference type="SUPFAM" id="SSF47240">
    <property type="entry name" value="Ferritin-like"/>
    <property type="match status" value="1"/>
</dbReference>
<dbReference type="PROSITE" id="PS00574">
    <property type="entry name" value="FATTY_ACID_DESATUR_2"/>
    <property type="match status" value="1"/>
</dbReference>
<sequence>MALKLNPFLSQTQKLPSFALPPMASTRSPKFYMASTLKSGSKEVENLKKPFMPPREVHVQVTHSMPPQKIEIFKSLDNWAEENILVHLKPVEKCWQPQDFLPDPASDGFDEQVRELRERAKEIPDDYFVVLVGDMITEEALPTYQTMLNTLDGVRDETGASPTSWAIWTRAWTAEENRHGDLLNKYLYLSGRVDMRQIEKTIQYLIGSGMDPRTENSPYLGFIYTSFQERATFISHGNTARQAKEHGDIKLAQICGTIAADEKRHETAYTKIVEKLFEIDPDGTVLAFADMMRKKISMPAHLMYDGRDDNLFDHFSAVAQRLGVYTAKDYADILEFLVGRWKVDKLTGLSAEGQKAQDYVCRLPPRIRRLEERAQGRAKEAPTMPFSWIFDRQVKL</sequence>